<dbReference type="EMBL" id="CP000682">
    <property type="protein sequence ID" value="ABP96271.1"/>
    <property type="molecule type" value="Genomic_DNA"/>
</dbReference>
<dbReference type="RefSeq" id="WP_012022058.1">
    <property type="nucleotide sequence ID" value="NZ_CP139956.1"/>
</dbReference>
<dbReference type="SMR" id="A4YIL9"/>
<dbReference type="STRING" id="399549.Msed_2132"/>
<dbReference type="GeneID" id="97612757"/>
<dbReference type="KEGG" id="mse:Msed_2132"/>
<dbReference type="eggNOG" id="arCOG01751">
    <property type="taxonomic scope" value="Archaea"/>
</dbReference>
<dbReference type="HOGENOM" id="CLU_084513_4_0_2"/>
<dbReference type="Proteomes" id="UP000000242">
    <property type="component" value="Chromosome"/>
</dbReference>
<dbReference type="GO" id="GO:0005737">
    <property type="term" value="C:cytoplasm"/>
    <property type="evidence" value="ECO:0007669"/>
    <property type="project" value="UniProtKB-SubCell"/>
</dbReference>
<dbReference type="GO" id="GO:1990904">
    <property type="term" value="C:ribonucleoprotein complex"/>
    <property type="evidence" value="ECO:0007669"/>
    <property type="project" value="UniProtKB-KW"/>
</dbReference>
<dbReference type="GO" id="GO:0005840">
    <property type="term" value="C:ribosome"/>
    <property type="evidence" value="ECO:0007669"/>
    <property type="project" value="UniProtKB-KW"/>
</dbReference>
<dbReference type="GO" id="GO:0004526">
    <property type="term" value="F:ribonuclease P activity"/>
    <property type="evidence" value="ECO:0007669"/>
    <property type="project" value="UniProtKB-UniRule"/>
</dbReference>
<dbReference type="GO" id="GO:0019843">
    <property type="term" value="F:rRNA binding"/>
    <property type="evidence" value="ECO:0007669"/>
    <property type="project" value="UniProtKB-KW"/>
</dbReference>
<dbReference type="GO" id="GO:0003735">
    <property type="term" value="F:structural constituent of ribosome"/>
    <property type="evidence" value="ECO:0007669"/>
    <property type="project" value="InterPro"/>
</dbReference>
<dbReference type="GO" id="GO:0006412">
    <property type="term" value="P:translation"/>
    <property type="evidence" value="ECO:0007669"/>
    <property type="project" value="UniProtKB-UniRule"/>
</dbReference>
<dbReference type="GO" id="GO:0001682">
    <property type="term" value="P:tRNA 5'-leader removal"/>
    <property type="evidence" value="ECO:0007669"/>
    <property type="project" value="UniProtKB-UniRule"/>
</dbReference>
<dbReference type="FunFam" id="3.30.1330.30:FF:000020">
    <property type="entry name" value="50S ribosomal protein L7Ae"/>
    <property type="match status" value="1"/>
</dbReference>
<dbReference type="Gene3D" id="3.30.1330.30">
    <property type="match status" value="1"/>
</dbReference>
<dbReference type="HAMAP" id="MF_00326">
    <property type="entry name" value="Ribosomal_eL8"/>
    <property type="match status" value="1"/>
</dbReference>
<dbReference type="InterPro" id="IPR050257">
    <property type="entry name" value="eL8/uL1-like"/>
</dbReference>
<dbReference type="InterPro" id="IPR029064">
    <property type="entry name" value="Ribosomal_eL30-like_sf"/>
</dbReference>
<dbReference type="InterPro" id="IPR004038">
    <property type="entry name" value="Ribosomal_eL8/eL30/eS12/Gad45"/>
</dbReference>
<dbReference type="InterPro" id="IPR018492">
    <property type="entry name" value="Ribosomal_eL8/Nhp2"/>
</dbReference>
<dbReference type="InterPro" id="IPR022481">
    <property type="entry name" value="Ribosomal_eL8_arc"/>
</dbReference>
<dbReference type="NCBIfam" id="TIGR03677">
    <property type="entry name" value="eL8_ribo"/>
    <property type="match status" value="1"/>
</dbReference>
<dbReference type="PANTHER" id="PTHR23105">
    <property type="entry name" value="RIBOSOMAL PROTEIN L7AE FAMILY MEMBER"/>
    <property type="match status" value="1"/>
</dbReference>
<dbReference type="Pfam" id="PF01248">
    <property type="entry name" value="Ribosomal_L7Ae"/>
    <property type="match status" value="1"/>
</dbReference>
<dbReference type="PRINTS" id="PR00881">
    <property type="entry name" value="L7ARS6FAMILY"/>
</dbReference>
<dbReference type="PRINTS" id="PR00884">
    <property type="entry name" value="RIBOSOMALHS6"/>
</dbReference>
<dbReference type="SUPFAM" id="SSF55315">
    <property type="entry name" value="L30e-like"/>
    <property type="match status" value="1"/>
</dbReference>
<protein>
    <recommendedName>
        <fullName evidence="1">Large ribosomal subunit protein eL8</fullName>
    </recommendedName>
    <alternativeName>
        <fullName evidence="2">50S ribosomal protein L7Ae</fullName>
    </alternativeName>
    <alternativeName>
        <fullName evidence="1">Ribosomal protein L8e</fullName>
    </alternativeName>
</protein>
<comment type="function">
    <text evidence="1">Multifunctional RNA-binding protein that recognizes the K-turn motif in ribosomal RNA, the RNA component of RNase P, box H/ACA, box C/D and box C'/D' sRNAs.</text>
</comment>
<comment type="subunit">
    <text evidence="1">Part of the 50S ribosomal subunit. Probably part of the RNase P complex.</text>
</comment>
<comment type="subcellular location">
    <subcellularLocation>
        <location evidence="1">Cytoplasm</location>
    </subcellularLocation>
</comment>
<comment type="similarity">
    <text evidence="1">Belongs to the eukaryotic ribosomal protein eL8 family.</text>
</comment>
<organism>
    <name type="scientific">Metallosphaera sedula (strain ATCC 51363 / DSM 5348 / JCM 9185 / NBRC 15509 / TH2)</name>
    <dbReference type="NCBI Taxonomy" id="399549"/>
    <lineage>
        <taxon>Archaea</taxon>
        <taxon>Thermoproteota</taxon>
        <taxon>Thermoprotei</taxon>
        <taxon>Sulfolobales</taxon>
        <taxon>Sulfolobaceae</taxon>
        <taxon>Metallosphaera</taxon>
    </lineage>
</organism>
<reference key="1">
    <citation type="journal article" date="2008" name="Appl. Environ. Microbiol.">
        <title>The genome sequence of the metal-mobilizing, extremely thermoacidophilic archaeon Metallosphaera sedula provides insights into bioleaching-associated metabolism.</title>
        <authorList>
            <person name="Auernik K.S."/>
            <person name="Maezato Y."/>
            <person name="Blum P.H."/>
            <person name="Kelly R.M."/>
        </authorList>
    </citation>
    <scope>NUCLEOTIDE SEQUENCE [LARGE SCALE GENOMIC DNA]</scope>
    <source>
        <strain>ATCC 51363 / DSM 5348 / JCM 9185 / NBRC 15509 / TH2</strain>
    </source>
</reference>
<sequence>MAKPSYVKFDVPPELAEKALEALKKAKETGKIRKGTNEATKAIERGQAKLVLIAEDVQPEEIVAHLPPLCEEKKIPYIYVPTKKGIGEACGLQVGAAAAAILDPGQGKDVLDEVIKRVSELTGKS</sequence>
<evidence type="ECO:0000255" key="1">
    <source>
        <dbReference type="HAMAP-Rule" id="MF_00326"/>
    </source>
</evidence>
<evidence type="ECO:0000305" key="2"/>
<keyword id="KW-0963">Cytoplasm</keyword>
<keyword id="KW-1185">Reference proteome</keyword>
<keyword id="KW-0687">Ribonucleoprotein</keyword>
<keyword id="KW-0689">Ribosomal protein</keyword>
<keyword id="KW-0694">RNA-binding</keyword>
<keyword id="KW-0699">rRNA-binding</keyword>
<keyword id="KW-0819">tRNA processing</keyword>
<name>RL7A_METS5</name>
<feature type="chain" id="PRO_1000072028" description="Large ribosomal subunit protein eL8">
    <location>
        <begin position="1"/>
        <end position="125"/>
    </location>
</feature>
<accession>A4YIL9</accession>
<gene>
    <name evidence="1" type="primary">rpl7ae</name>
    <name type="ordered locus">Msed_2132</name>
</gene>
<proteinExistence type="inferred from homology"/>